<name>PGAP6_HUMAN</name>
<organism>
    <name type="scientific">Homo sapiens</name>
    <name type="common">Human</name>
    <dbReference type="NCBI Taxonomy" id="9606"/>
    <lineage>
        <taxon>Eukaryota</taxon>
        <taxon>Metazoa</taxon>
        <taxon>Chordata</taxon>
        <taxon>Craniata</taxon>
        <taxon>Vertebrata</taxon>
        <taxon>Euteleostomi</taxon>
        <taxon>Mammalia</taxon>
        <taxon>Eutheria</taxon>
        <taxon>Euarchontoglires</taxon>
        <taxon>Primates</taxon>
        <taxon>Haplorrhini</taxon>
        <taxon>Catarrhini</taxon>
        <taxon>Hominidae</taxon>
        <taxon>Homo</taxon>
    </lineage>
</organism>
<protein>
    <recommendedName>
        <fullName evidence="12">Post-GPI attachment to proteins factor 6</fullName>
        <ecNumber evidence="14">3.1.1.4</ecNumber>
    </recommendedName>
    <alternativeName>
        <fullName evidence="12">GPI processing phospholipase A2</fullName>
        <shortName evidence="12">GPI-PLA2</shortName>
    </alternativeName>
    <alternativeName>
        <fullName>Protein M83</fullName>
    </alternativeName>
    <alternativeName>
        <fullName>Transmembrane protein 6</fullName>
    </alternativeName>
    <alternativeName>
        <fullName>Transmembrane protein 8</fullName>
    </alternativeName>
    <alternativeName>
        <fullName>Transmembrane protein 8A</fullName>
    </alternativeName>
</protein>
<gene>
    <name evidence="12 15" type="primary">PGAP6</name>
    <name type="synonym">TMEM6</name>
    <name type="synonym">TMEM8</name>
    <name type="synonym">TMEM8A</name>
</gene>
<sequence>MGRAGTGTGGEAVAAVVAGPLLLLLLARPPPASAGYSGKSEVGLVSEHFSQAPQRLSFYSWYGSARLFRFRVPPDAVLLRWLLQVSRESGAACTDAEITVHFRSGAPPVINPLGTSFPDDTAVQPSFQVGVPLSTTPRSNASVNVSHPAPGDWFVAAHLPPSSQKIELKGLAPTCAYVFQPELLVTRVVEISIMEPDVPLPQTLLSHPSYLKVFVPDYTRELLLELRDCVSNGSLGCPVRLTVGPVTLPSNFQKVLTCTGAPWPCRLLLPSPPWDRWLQVTAESLVGPLGTVAFSAVAALTACRPRSVTIQPLLQSSQNQSFNASSGLLSPSPDHQDLGRSGRVDRSPFCLTNYPVTREDMDVVSVHFQPLDRVSVRVCSDTPSVMRLRLNTGMDSGGSLTISLRANKTEMRNETVVVACVNAASPFLGFNTSLNCTTAFFQGYPLSLSAWSRRANLIIPYPETDNWYLSLQLMCPENAEDCEQAVVHVETTLYLVPCLNDCGPYGQCLLLRRHSYLYASCSCKAGWRGWSCTDNSTAQTVAQQRAATLLLTLSNLMFLAPIAVSVRRFFLVEASVYAYTMFFSTFYHACDQPGEAVLCILSYDTLQYCDFLGSGAAIWVTILCMARLKTVLKYVLFLLGTLVIAMSLQLDRRGMWNMLGPCLFAFVIMASMWAYRCGHRRQCYPTSWQRWAFYLLPGVSMASVGIAIYTSMMTSDNYYYTHSIWHILLAGSAALLLPPPDQPAEPWACSQKFPCHYQICKNDREELYAVT</sequence>
<dbReference type="EC" id="3.1.1.4" evidence="14"/>
<dbReference type="EMBL" id="AB045292">
    <property type="protein sequence ID" value="BAB16376.1"/>
    <property type="molecule type" value="mRNA"/>
</dbReference>
<dbReference type="EMBL" id="AE006463">
    <property type="protein sequence ID" value="AAK61227.1"/>
    <property type="molecule type" value="Genomic_DNA"/>
</dbReference>
<dbReference type="EMBL" id="Z97634">
    <property type="status" value="NOT_ANNOTATED_CDS"/>
    <property type="molecule type" value="Genomic_DNA"/>
</dbReference>
<dbReference type="EMBL" id="CH471112">
    <property type="protein sequence ID" value="EAW85824.1"/>
    <property type="molecule type" value="Genomic_DNA"/>
</dbReference>
<dbReference type="EMBL" id="CH471112">
    <property type="protein sequence ID" value="EAW85825.1"/>
    <property type="molecule type" value="Genomic_DNA"/>
</dbReference>
<dbReference type="EMBL" id="BC021557">
    <property type="protein sequence ID" value="AAH21557.1"/>
    <property type="molecule type" value="mRNA"/>
</dbReference>
<dbReference type="EMBL" id="BC004276">
    <property type="protein sequence ID" value="AAH04276.1"/>
    <property type="molecule type" value="mRNA"/>
</dbReference>
<dbReference type="EMBL" id="AK024725">
    <property type="protein sequence ID" value="BAB14975.1"/>
    <property type="status" value="ALT_SEQ"/>
    <property type="molecule type" value="mRNA"/>
</dbReference>
<dbReference type="CCDS" id="CCDS10407.1"/>
<dbReference type="PIR" id="JC7388">
    <property type="entry name" value="JC7388"/>
</dbReference>
<dbReference type="RefSeq" id="NP_067082.2">
    <property type="nucleotide sequence ID" value="NM_021259.3"/>
</dbReference>
<dbReference type="SMR" id="Q9HCN3"/>
<dbReference type="BioGRID" id="121856">
    <property type="interactions" value="31"/>
</dbReference>
<dbReference type="FunCoup" id="Q9HCN3">
    <property type="interactions" value="450"/>
</dbReference>
<dbReference type="IntAct" id="Q9HCN3">
    <property type="interactions" value="25"/>
</dbReference>
<dbReference type="STRING" id="9606.ENSP00000401338"/>
<dbReference type="TCDB" id="1.N.2.1.6">
    <property type="family name" value="the myoblast fusion complex (mfc) family"/>
</dbReference>
<dbReference type="GlyConnect" id="1856">
    <property type="glycosylation" value="1 N-Linked glycan (1 site)"/>
</dbReference>
<dbReference type="GlyCosmos" id="Q9HCN3">
    <property type="glycosylation" value="5 sites, 2 glycans"/>
</dbReference>
<dbReference type="GlyGen" id="Q9HCN3">
    <property type="glycosylation" value="6 sites, 4 N-linked glycans (3 sites), 1 O-linked glycan (1 site)"/>
</dbReference>
<dbReference type="iPTMnet" id="Q9HCN3"/>
<dbReference type="PhosphoSitePlus" id="Q9HCN3"/>
<dbReference type="SwissPalm" id="Q9HCN3"/>
<dbReference type="BioMuta" id="TMEM8A"/>
<dbReference type="DMDM" id="296453013"/>
<dbReference type="jPOST" id="Q9HCN3"/>
<dbReference type="MassIVE" id="Q9HCN3"/>
<dbReference type="PaxDb" id="9606-ENSP00000401338"/>
<dbReference type="PeptideAtlas" id="Q9HCN3"/>
<dbReference type="ProteomicsDB" id="81774"/>
<dbReference type="Antibodypedia" id="55489">
    <property type="antibodies" value="21 antibodies from 10 providers"/>
</dbReference>
<dbReference type="DNASU" id="58986"/>
<dbReference type="Ensembl" id="ENST00000431232.7">
    <property type="protein sequence ID" value="ENSP00000401338.2"/>
    <property type="gene ID" value="ENSG00000129925.11"/>
</dbReference>
<dbReference type="GeneID" id="58986"/>
<dbReference type="KEGG" id="hsa:58986"/>
<dbReference type="MANE-Select" id="ENST00000431232.7">
    <property type="protein sequence ID" value="ENSP00000401338.2"/>
    <property type="RefSeq nucleotide sequence ID" value="NM_021259.3"/>
    <property type="RefSeq protein sequence ID" value="NP_067082.2"/>
</dbReference>
<dbReference type="UCSC" id="uc002cgu.5">
    <property type="organism name" value="human"/>
</dbReference>
<dbReference type="AGR" id="HGNC:17205"/>
<dbReference type="CTD" id="58986"/>
<dbReference type="DisGeNET" id="58986"/>
<dbReference type="GeneCards" id="PGAP6"/>
<dbReference type="HGNC" id="HGNC:17205">
    <property type="gene designation" value="PGAP6"/>
</dbReference>
<dbReference type="HPA" id="ENSG00000129925">
    <property type="expression patterns" value="Low tissue specificity"/>
</dbReference>
<dbReference type="MIM" id="619342">
    <property type="type" value="gene"/>
</dbReference>
<dbReference type="neXtProt" id="NX_Q9HCN3"/>
<dbReference type="OpenTargets" id="ENSG00000129925"/>
<dbReference type="PharmGKB" id="PA38211"/>
<dbReference type="VEuPathDB" id="HostDB:ENSG00000129925"/>
<dbReference type="eggNOG" id="ENOG502QQ7Q">
    <property type="taxonomic scope" value="Eukaryota"/>
</dbReference>
<dbReference type="GeneTree" id="ENSGT00940000160060"/>
<dbReference type="InParanoid" id="Q9HCN3"/>
<dbReference type="OMA" id="AKRRHCY"/>
<dbReference type="OrthoDB" id="69646at2759"/>
<dbReference type="PAN-GO" id="Q9HCN3">
    <property type="GO annotations" value="1 GO annotation based on evolutionary models"/>
</dbReference>
<dbReference type="PhylomeDB" id="Q9HCN3"/>
<dbReference type="TreeFam" id="TF331003"/>
<dbReference type="PathwayCommons" id="Q9HCN3"/>
<dbReference type="SignaLink" id="Q9HCN3"/>
<dbReference type="BioGRID-ORCS" id="58986">
    <property type="hits" value="31 hits in 1151 CRISPR screens"/>
</dbReference>
<dbReference type="ChiTaRS" id="TMEM8A">
    <property type="organism name" value="human"/>
</dbReference>
<dbReference type="GenomeRNAi" id="58986"/>
<dbReference type="Pharos" id="Q9HCN3">
    <property type="development level" value="Tdark"/>
</dbReference>
<dbReference type="PRO" id="PR:Q9HCN3"/>
<dbReference type="Proteomes" id="UP000005640">
    <property type="component" value="Chromosome 16"/>
</dbReference>
<dbReference type="RNAct" id="Q9HCN3">
    <property type="molecule type" value="protein"/>
</dbReference>
<dbReference type="Bgee" id="ENSG00000129925">
    <property type="expression patterns" value="Expressed in body of pancreas and 165 other cell types or tissues"/>
</dbReference>
<dbReference type="ExpressionAtlas" id="Q9HCN3">
    <property type="expression patterns" value="baseline and differential"/>
</dbReference>
<dbReference type="GO" id="GO:0070062">
    <property type="term" value="C:extracellular exosome"/>
    <property type="evidence" value="ECO:0007005"/>
    <property type="project" value="UniProtKB"/>
</dbReference>
<dbReference type="GO" id="GO:0005765">
    <property type="term" value="C:lysosomal membrane"/>
    <property type="evidence" value="ECO:0007005"/>
    <property type="project" value="UniProtKB"/>
</dbReference>
<dbReference type="GO" id="GO:0005886">
    <property type="term" value="C:plasma membrane"/>
    <property type="evidence" value="ECO:0000303"/>
    <property type="project" value="UniProtKB"/>
</dbReference>
<dbReference type="GO" id="GO:0004623">
    <property type="term" value="F:phospholipase A2 activity"/>
    <property type="evidence" value="ECO:0007669"/>
    <property type="project" value="UniProtKB-EC"/>
</dbReference>
<dbReference type="GO" id="GO:0006629">
    <property type="term" value="P:lipid metabolic process"/>
    <property type="evidence" value="ECO:0007669"/>
    <property type="project" value="UniProtKB-KW"/>
</dbReference>
<dbReference type="InterPro" id="IPR000742">
    <property type="entry name" value="EGF-like_dom"/>
</dbReference>
<dbReference type="InterPro" id="IPR021910">
    <property type="entry name" value="NGX6/PGAP6/MYMK"/>
</dbReference>
<dbReference type="PANTHER" id="PTHR14319">
    <property type="entry name" value="FIVE-SPAN TRANSMEMBRANE PROTEIN M83"/>
    <property type="match status" value="1"/>
</dbReference>
<dbReference type="PANTHER" id="PTHR14319:SF7">
    <property type="entry name" value="POST-GPI ATTACHMENT TO PROTEINS FACTOR 6"/>
    <property type="match status" value="1"/>
</dbReference>
<dbReference type="Pfam" id="PF12036">
    <property type="entry name" value="DUF3522"/>
    <property type="match status" value="1"/>
</dbReference>
<dbReference type="PROSITE" id="PS00022">
    <property type="entry name" value="EGF_1"/>
    <property type="match status" value="1"/>
</dbReference>
<dbReference type="PROSITE" id="PS01186">
    <property type="entry name" value="EGF_2"/>
    <property type="match status" value="1"/>
</dbReference>
<dbReference type="PROSITE" id="PS50026">
    <property type="entry name" value="EGF_3"/>
    <property type="match status" value="1"/>
</dbReference>
<proteinExistence type="evidence at protein level"/>
<accession>Q9HCN3</accession>
<accession>D3DU49</accession>
<accession>Q4TT35</accession>
<accession>Q8WU24</accession>
<accession>Q96S25</accession>
<accession>Q9BR03</accession>
<accession>Q9BT97</accession>
<accession>Q9H7B9</accession>
<comment type="function">
    <text evidence="8 9 10">Involved in the lipid remodeling steps of GPI-anchor maturation. Lipid remodeling steps consist in the generation of 2 saturated fatty chains at the sn-2 position of GPI-anchor proteins (GPI-AP). Has phospholipase A2 activity that removes an acyl-chain at the sn-2 position of GPI-anchors during the remodeling of GPI. Required for the shedding of the GPI-AP CRIPTO, but not CFC1, at the cell surface. Shedding of CRIPTO modulates Nodal signaling by allowing soluble CRIPTO to act as a Nodal coreceptor on other cells (PubMed:27881714). Also indirectly involved in the translocation of RAC1 from the cytosol to the plasma membrane by maintaining the steady state amount of CAV1-enriched plasma membrane subdomains, stabilizing RAC1 at the plasma membrane (PubMed:27835684). In contrast to myomaker (TMEM8C), has no fusogenic activity (PubMed:26858401).</text>
</comment>
<comment type="catalytic activity">
    <reaction evidence="14">
        <text>a 1,2-diacyl-sn-glycero-3-phosphocholine + H2O = a 1-acyl-sn-glycero-3-phosphocholine + a fatty acid + H(+)</text>
        <dbReference type="Rhea" id="RHEA:15801"/>
        <dbReference type="ChEBI" id="CHEBI:15377"/>
        <dbReference type="ChEBI" id="CHEBI:15378"/>
        <dbReference type="ChEBI" id="CHEBI:28868"/>
        <dbReference type="ChEBI" id="CHEBI:57643"/>
        <dbReference type="ChEBI" id="CHEBI:58168"/>
        <dbReference type="EC" id="3.1.1.4"/>
    </reaction>
</comment>
<comment type="interaction">
    <interactant intactId="EBI-10310808">
        <id>Q9HCN3</id>
    </interactant>
    <interactant intactId="EBI-3867333">
        <id>A8MQ03</id>
        <label>CYSRT1</label>
    </interactant>
    <organismsDiffer>false</organismsDiffer>
    <experiments>3</experiments>
</comment>
<comment type="interaction">
    <interactant intactId="EBI-10310808">
        <id>Q9HCN3</id>
    </interactant>
    <interactant intactId="EBI-7060731">
        <id>P61978-2</id>
        <label>HNRNPK</label>
    </interactant>
    <organismsDiffer>false</organismsDiffer>
    <experiments>3</experiments>
</comment>
<comment type="interaction">
    <interactant intactId="EBI-10310808">
        <id>Q9HCN3</id>
    </interactant>
    <interactant intactId="EBI-948001">
        <id>Q15323</id>
        <label>KRT31</label>
    </interactant>
    <organismsDiffer>false</organismsDiffer>
    <experiments>3</experiments>
</comment>
<comment type="interaction">
    <interactant intactId="EBI-10310808">
        <id>Q9HCN3</id>
    </interactant>
    <interactant intactId="EBI-11959885">
        <id>Q07627</id>
        <label>KRTAP1-1</label>
    </interactant>
    <organismsDiffer>false</organismsDiffer>
    <experiments>3</experiments>
</comment>
<comment type="interaction">
    <interactant intactId="EBI-10310808">
        <id>Q9HCN3</id>
    </interactant>
    <interactant intactId="EBI-10172290">
        <id>P60409</id>
        <label>KRTAP10-7</label>
    </interactant>
    <organismsDiffer>false</organismsDiffer>
    <experiments>3</experiments>
</comment>
<comment type="interaction">
    <interactant intactId="EBI-10310808">
        <id>Q9HCN3</id>
    </interactant>
    <interactant intactId="EBI-10171774">
        <id>P60410</id>
        <label>KRTAP10-8</label>
    </interactant>
    <organismsDiffer>false</organismsDiffer>
    <experiments>3</experiments>
</comment>
<comment type="interaction">
    <interactant intactId="EBI-10310808">
        <id>Q9HCN3</id>
    </interactant>
    <interactant intactId="EBI-11953334">
        <id>P60328</id>
        <label>KRTAP12-3</label>
    </interactant>
    <organismsDiffer>false</organismsDiffer>
    <experiments>3</experiments>
</comment>
<comment type="interaction">
    <interactant intactId="EBI-10310808">
        <id>Q9HCN3</id>
    </interactant>
    <interactant intactId="EBI-3958099">
        <id>P26371</id>
        <label>KRTAP5-9</label>
    </interactant>
    <organismsDiffer>false</organismsDiffer>
    <experiments>3</experiments>
</comment>
<comment type="interaction">
    <interactant intactId="EBI-10310808">
        <id>Q9HCN3</id>
    </interactant>
    <interactant intactId="EBI-22311199">
        <id>Q3LI67</id>
        <label>KRTAP6-3</label>
    </interactant>
    <organismsDiffer>false</organismsDiffer>
    <experiments>3</experiments>
</comment>
<comment type="interaction">
    <interactant intactId="EBI-10310808">
        <id>Q9HCN3</id>
    </interactant>
    <interactant intactId="EBI-22310682">
        <id>P0DPK4</id>
        <label>NOTCH2NLC</label>
    </interactant>
    <organismsDiffer>false</organismsDiffer>
    <experiments>3</experiments>
</comment>
<comment type="interaction">
    <interactant intactId="EBI-10310808">
        <id>Q9HCN3</id>
    </interactant>
    <interactant intactId="EBI-307352">
        <id>Q04864</id>
        <label>REL</label>
    </interactant>
    <organismsDiffer>false</organismsDiffer>
    <experiments>3</experiments>
</comment>
<comment type="interaction">
    <interactant intactId="EBI-10310808">
        <id>Q9HCN3</id>
    </interactant>
    <interactant intactId="EBI-10829018">
        <id>Q04864-2</id>
        <label>REL</label>
    </interactant>
    <organismsDiffer>false</organismsDiffer>
    <experiments>3</experiments>
</comment>
<comment type="subcellular location">
    <subcellularLocation>
        <location evidence="10">Cell membrane</location>
        <topology evidence="1">Multi-pass membrane protein</topology>
    </subcellularLocation>
    <subcellularLocation>
        <location evidence="7">Lysosome membrane</location>
        <topology evidence="1">Multi-pass membrane protein</topology>
    </subcellularLocation>
</comment>
<comment type="tissue specificity">
    <text evidence="4">Expressed in pancreas, placenta, spleen, liver, kidney, bone marrow, peripheral blood leukocytes and tonsil.</text>
</comment>
<comment type="induction">
    <text>Repressed during activation of CD4+ and CD8+ T-lymphocytes.</text>
</comment>
<comment type="PTM">
    <text evidence="4">Glycosylated.</text>
</comment>
<comment type="similarity">
    <text evidence="13">Belongs to the TMEM8 family.</text>
</comment>
<comment type="sequence caution" evidence="13">
    <conflict type="erroneous termination">
        <sequence resource="EMBL-CDS" id="BAB14975"/>
    </conflict>
    <text>Truncated C-terminus.</text>
</comment>
<feature type="signal peptide" evidence="1">
    <location>
        <begin position="1"/>
        <end position="34"/>
    </location>
</feature>
<feature type="chain" id="PRO_0000022539" description="Post-GPI attachment to proteins factor 6">
    <location>
        <begin position="35"/>
        <end position="771"/>
    </location>
</feature>
<feature type="topological domain" description="Extracellular" evidence="1">
    <location>
        <begin position="35"/>
        <end position="545"/>
    </location>
</feature>
<feature type="transmembrane region" description="Helical" evidence="1">
    <location>
        <begin position="546"/>
        <end position="566"/>
    </location>
</feature>
<feature type="topological domain" description="Cytoplasmic" evidence="1">
    <location>
        <begin position="567"/>
        <end position="568"/>
    </location>
</feature>
<feature type="transmembrane region" description="Helical" evidence="1">
    <location>
        <begin position="569"/>
        <end position="589"/>
    </location>
</feature>
<feature type="topological domain" description="Extracellular" evidence="1">
    <location>
        <begin position="590"/>
        <end position="605"/>
    </location>
</feature>
<feature type="transmembrane region" description="Helical" evidence="1">
    <location>
        <begin position="606"/>
        <end position="626"/>
    </location>
</feature>
<feature type="topological domain" description="Cytoplasmic" evidence="1">
    <location>
        <begin position="627"/>
        <end position="629"/>
    </location>
</feature>
<feature type="transmembrane region" description="Helical" evidence="1">
    <location>
        <begin position="630"/>
        <end position="650"/>
    </location>
</feature>
<feature type="topological domain" description="Extracellular" evidence="1">
    <location>
        <begin position="651"/>
        <end position="653"/>
    </location>
</feature>
<feature type="transmembrane region" description="Helical" evidence="1">
    <location>
        <begin position="654"/>
        <end position="674"/>
    </location>
</feature>
<feature type="topological domain" description="Cytoplasmic" evidence="1">
    <location>
        <begin position="675"/>
        <end position="690"/>
    </location>
</feature>
<feature type="transmembrane region" description="Helical" evidence="1">
    <location>
        <begin position="691"/>
        <end position="711"/>
    </location>
</feature>
<feature type="topological domain" description="Extracellular" evidence="1">
    <location>
        <begin position="712"/>
        <end position="717"/>
    </location>
</feature>
<feature type="transmembrane region" description="Helical" evidence="1">
    <location>
        <begin position="718"/>
        <end position="738"/>
    </location>
</feature>
<feature type="topological domain" description="Cytoplasmic" evidence="1">
    <location>
        <begin position="739"/>
        <end position="771"/>
    </location>
</feature>
<feature type="domain" description="EGF-like" evidence="2">
    <location>
        <begin position="497"/>
        <end position="533"/>
    </location>
</feature>
<feature type="region of interest" description="Disordered" evidence="3">
    <location>
        <begin position="322"/>
        <end position="343"/>
    </location>
</feature>
<feature type="compositionally biased region" description="Basic and acidic residues" evidence="3">
    <location>
        <begin position="334"/>
        <end position="343"/>
    </location>
</feature>
<feature type="glycosylation site" description="N-linked (GlcNAc...) asparagine" evidence="1">
    <location>
        <position position="144"/>
    </location>
</feature>
<feature type="glycosylation site" description="N-linked (GlcNAc...) asparagine" evidence="1">
    <location>
        <position position="407"/>
    </location>
</feature>
<feature type="glycosylation site" description="N-linked (GlcNAc...) asparagine" evidence="1">
    <location>
        <position position="431"/>
    </location>
</feature>
<feature type="disulfide bond" evidence="2">
    <location>
        <begin position="498"/>
        <end position="508"/>
    </location>
</feature>
<feature type="disulfide bond" evidence="2">
    <location>
        <begin position="502"/>
        <end position="521"/>
    </location>
</feature>
<feature type="disulfide bond" evidence="2">
    <location>
        <begin position="523"/>
        <end position="532"/>
    </location>
</feature>
<feature type="sequence variant" id="VAR_025307" description="In dbSNP:rs11248931." evidence="4 6 11">
    <original>T</original>
    <variation>A</variation>
    <location>
        <position position="136"/>
    </location>
</feature>
<feature type="sequence variant" id="VAR_025308" description="In dbSNP:rs2071915." evidence="4 5 6">
    <original>I</original>
    <variation>V</variation>
    <location>
        <position position="310"/>
    </location>
</feature>
<feature type="sequence variant" id="VAR_057810" description="In dbSNP:rs3743887." evidence="5">
    <original>R</original>
    <variation>W</variation>
    <location>
        <position position="567"/>
    </location>
</feature>
<feature type="mutagenesis site" description="No effect." evidence="10">
    <original>S</original>
    <variation>A</variation>
    <location>
        <position position="584"/>
    </location>
</feature>
<feature type="mutagenesis site" description="Abolishes shedding of CRIPTO." evidence="10">
    <original>H</original>
    <variation>A</variation>
    <location>
        <position position="588"/>
    </location>
</feature>
<feature type="mutagenesis site" description="Abolishes shedding of CRIPTO." evidence="10">
    <original>D</original>
    <variation>A</variation>
    <location>
        <position position="610"/>
    </location>
</feature>
<feature type="mutagenesis site" description="Abolishes shedding of CRIPTO." evidence="10">
    <original>H</original>
    <variation>A</variation>
    <location>
        <position position="722"/>
    </location>
</feature>
<feature type="mutagenesis site" description="Abolishes shedding of CRIPTO." evidence="10">
    <original>H</original>
    <variation>A</variation>
    <location>
        <position position="726"/>
    </location>
</feature>
<feature type="sequence conflict" description="In Ref. 6; BAB14975." evidence="13" ref="6">
    <original>P</original>
    <variation>A</variation>
    <location>
        <position position="460"/>
    </location>
</feature>
<feature type="sequence conflict" description="In Ref. 1; BAB16376." evidence="13" ref="1">
    <original>G</original>
    <variation>D</variation>
    <location>
        <position position="654"/>
    </location>
</feature>
<feature type="sequence conflict" description="In Ref. 6; BAB14975." evidence="13" ref="6">
    <original>S</original>
    <variation>L</variation>
    <location>
        <position position="687"/>
    </location>
</feature>
<evidence type="ECO:0000255" key="1"/>
<evidence type="ECO:0000255" key="2">
    <source>
        <dbReference type="PROSITE-ProRule" id="PRU00076"/>
    </source>
</evidence>
<evidence type="ECO:0000256" key="3">
    <source>
        <dbReference type="SAM" id="MobiDB-lite"/>
    </source>
</evidence>
<evidence type="ECO:0000269" key="4">
    <source>
    </source>
</evidence>
<evidence type="ECO:0000269" key="5">
    <source>
    </source>
</evidence>
<evidence type="ECO:0000269" key="6">
    <source>
    </source>
</evidence>
<evidence type="ECO:0000269" key="7">
    <source>
    </source>
</evidence>
<evidence type="ECO:0000269" key="8">
    <source>
    </source>
</evidence>
<evidence type="ECO:0000269" key="9">
    <source>
    </source>
</evidence>
<evidence type="ECO:0000269" key="10">
    <source>
    </source>
</evidence>
<evidence type="ECO:0000269" key="11">
    <source ref="3"/>
</evidence>
<evidence type="ECO:0000303" key="12">
    <source>
    </source>
</evidence>
<evidence type="ECO:0000305" key="13"/>
<evidence type="ECO:0000305" key="14">
    <source>
    </source>
</evidence>
<evidence type="ECO:0000312" key="15">
    <source>
        <dbReference type="HGNC" id="HGNC:17205"/>
    </source>
</evidence>
<reference key="1">
    <citation type="journal article" date="2000" name="Biochem. Biophys. Res. Commun.">
        <title>Molecular cloning and chromosomal mapping of a novel five-span transmembrane protein gene, M83.</title>
        <authorList>
            <person name="Motohashi T."/>
            <person name="Miyoshi S."/>
            <person name="Osawa M."/>
            <person name="Eyre H.J."/>
            <person name="Sutherland G.R."/>
            <person name="Matsuda Y."/>
            <person name="Nakamura Y."/>
            <person name="Shibuya A."/>
            <person name="Iwama A."/>
            <person name="Nakauchi H."/>
        </authorList>
    </citation>
    <scope>NUCLEOTIDE SEQUENCE [MRNA]</scope>
    <scope>TISSUE SPECIFICITY</scope>
    <scope>GLYCOSYLATION</scope>
    <scope>VARIANTS VARIANT ALA-136 AND VAL-310</scope>
</reference>
<reference key="2">
    <citation type="journal article" date="2001" name="Hum. Mol. Genet.">
        <title>Sequence, structure and pathology of the fully annotated terminal 2 Mb of the short arm of human chromosome 16.</title>
        <authorList>
            <person name="Daniels R.J."/>
            <person name="Peden J.F."/>
            <person name="Lloyd C."/>
            <person name="Horsley S.W."/>
            <person name="Clark K."/>
            <person name="Tufarelli C."/>
            <person name="Kearney L."/>
            <person name="Buckle V.J."/>
            <person name="Doggett N.A."/>
            <person name="Flint J."/>
            <person name="Higgs D.R."/>
        </authorList>
    </citation>
    <scope>NUCLEOTIDE SEQUENCE [LARGE SCALE GENOMIC DNA]</scope>
</reference>
<reference key="3">
    <citation type="submission" date="2005-09" db="EMBL/GenBank/DDBJ databases">
        <authorList>
            <person name="Mural R.J."/>
            <person name="Istrail S."/>
            <person name="Sutton G.G."/>
            <person name="Florea L."/>
            <person name="Halpern A.L."/>
            <person name="Mobarry C.M."/>
            <person name="Lippert R."/>
            <person name="Walenz B."/>
            <person name="Shatkay H."/>
            <person name="Dew I."/>
            <person name="Miller J.R."/>
            <person name="Flanigan M.J."/>
            <person name="Edwards N.J."/>
            <person name="Bolanos R."/>
            <person name="Fasulo D."/>
            <person name="Halldorsson B.V."/>
            <person name="Hannenhalli S."/>
            <person name="Turner R."/>
            <person name="Yooseph S."/>
            <person name="Lu F."/>
            <person name="Nusskern D.R."/>
            <person name="Shue B.C."/>
            <person name="Zheng X.H."/>
            <person name="Zhong F."/>
            <person name="Delcher A.L."/>
            <person name="Huson D.H."/>
            <person name="Kravitz S.A."/>
            <person name="Mouchard L."/>
            <person name="Reinert K."/>
            <person name="Remington K.A."/>
            <person name="Clark A.G."/>
            <person name="Waterman M.S."/>
            <person name="Eichler E.E."/>
            <person name="Adams M.D."/>
            <person name="Hunkapiller M.W."/>
            <person name="Myers E.W."/>
            <person name="Venter J.C."/>
        </authorList>
    </citation>
    <scope>NUCLEOTIDE SEQUENCE [LARGE SCALE GENOMIC DNA]</scope>
    <scope>VARIANT ALA-136</scope>
</reference>
<reference key="4">
    <citation type="journal article" date="2004" name="Nature">
        <title>The sequence and analysis of duplication-rich human chromosome 16.</title>
        <authorList>
            <person name="Martin J."/>
            <person name="Han C."/>
            <person name="Gordon L.A."/>
            <person name="Terry A."/>
            <person name="Prabhakar S."/>
            <person name="She X."/>
            <person name="Xie G."/>
            <person name="Hellsten U."/>
            <person name="Chan Y.M."/>
            <person name="Altherr M."/>
            <person name="Couronne O."/>
            <person name="Aerts A."/>
            <person name="Bajorek E."/>
            <person name="Black S."/>
            <person name="Blumer H."/>
            <person name="Branscomb E."/>
            <person name="Brown N.C."/>
            <person name="Bruno W.J."/>
            <person name="Buckingham J.M."/>
            <person name="Callen D.F."/>
            <person name="Campbell C.S."/>
            <person name="Campbell M.L."/>
            <person name="Campbell E.W."/>
            <person name="Caoile C."/>
            <person name="Challacombe J.F."/>
            <person name="Chasteen L.A."/>
            <person name="Chertkov O."/>
            <person name="Chi H.C."/>
            <person name="Christensen M."/>
            <person name="Clark L.M."/>
            <person name="Cohn J.D."/>
            <person name="Denys M."/>
            <person name="Detter J.C."/>
            <person name="Dickson M."/>
            <person name="Dimitrijevic-Bussod M."/>
            <person name="Escobar J."/>
            <person name="Fawcett J.J."/>
            <person name="Flowers D."/>
            <person name="Fotopulos D."/>
            <person name="Glavina T."/>
            <person name="Gomez M."/>
            <person name="Gonzales E."/>
            <person name="Goodstein D."/>
            <person name="Goodwin L.A."/>
            <person name="Grady D.L."/>
            <person name="Grigoriev I."/>
            <person name="Groza M."/>
            <person name="Hammon N."/>
            <person name="Hawkins T."/>
            <person name="Haydu L."/>
            <person name="Hildebrand C.E."/>
            <person name="Huang W."/>
            <person name="Israni S."/>
            <person name="Jett J."/>
            <person name="Jewett P.B."/>
            <person name="Kadner K."/>
            <person name="Kimball H."/>
            <person name="Kobayashi A."/>
            <person name="Krawczyk M.-C."/>
            <person name="Leyba T."/>
            <person name="Longmire J.L."/>
            <person name="Lopez F."/>
            <person name="Lou Y."/>
            <person name="Lowry S."/>
            <person name="Ludeman T."/>
            <person name="Manohar C.F."/>
            <person name="Mark G.A."/>
            <person name="McMurray K.L."/>
            <person name="Meincke L.J."/>
            <person name="Morgan J."/>
            <person name="Moyzis R.K."/>
            <person name="Mundt M.O."/>
            <person name="Munk A.C."/>
            <person name="Nandkeshwar R.D."/>
            <person name="Pitluck S."/>
            <person name="Pollard M."/>
            <person name="Predki P."/>
            <person name="Parson-Quintana B."/>
            <person name="Ramirez L."/>
            <person name="Rash S."/>
            <person name="Retterer J."/>
            <person name="Ricke D.O."/>
            <person name="Robinson D.L."/>
            <person name="Rodriguez A."/>
            <person name="Salamov A."/>
            <person name="Saunders E.H."/>
            <person name="Scott D."/>
            <person name="Shough T."/>
            <person name="Stallings R.L."/>
            <person name="Stalvey M."/>
            <person name="Sutherland R.D."/>
            <person name="Tapia R."/>
            <person name="Tesmer J.G."/>
            <person name="Thayer N."/>
            <person name="Thompson L.S."/>
            <person name="Tice H."/>
            <person name="Torney D.C."/>
            <person name="Tran-Gyamfi M."/>
            <person name="Tsai M."/>
            <person name="Ulanovsky L.E."/>
            <person name="Ustaszewska A."/>
            <person name="Vo N."/>
            <person name="White P.S."/>
            <person name="Williams A.L."/>
            <person name="Wills P.L."/>
            <person name="Wu J.-R."/>
            <person name="Wu K."/>
            <person name="Yang J."/>
            <person name="DeJong P."/>
            <person name="Bruce D."/>
            <person name="Doggett N.A."/>
            <person name="Deaven L."/>
            <person name="Schmutz J."/>
            <person name="Grimwood J."/>
            <person name="Richardson P."/>
            <person name="Rokhsar D.S."/>
            <person name="Eichler E.E."/>
            <person name="Gilna P."/>
            <person name="Lucas S.M."/>
            <person name="Myers R.M."/>
            <person name="Rubin E.M."/>
            <person name="Pennacchio L.A."/>
        </authorList>
    </citation>
    <scope>NUCLEOTIDE SEQUENCE [LARGE SCALE GENOMIC DNA]</scope>
</reference>
<reference key="5">
    <citation type="journal article" date="2004" name="Genome Res.">
        <title>The status, quality, and expansion of the NIH full-length cDNA project: the Mammalian Gene Collection (MGC).</title>
        <authorList>
            <consortium name="The MGC Project Team"/>
        </authorList>
    </citation>
    <scope>NUCLEOTIDE SEQUENCE [LARGE SCALE MRNA]</scope>
    <scope>VARIANTS ALA-136 AND VAL-310</scope>
    <source>
        <tissue>Pancreas</tissue>
        <tissue>Skin</tissue>
    </source>
</reference>
<reference key="6">
    <citation type="journal article" date="2004" name="Nat. Genet.">
        <title>Complete sequencing and characterization of 21,243 full-length human cDNAs.</title>
        <authorList>
            <person name="Ota T."/>
            <person name="Suzuki Y."/>
            <person name="Nishikawa T."/>
            <person name="Otsuki T."/>
            <person name="Sugiyama T."/>
            <person name="Irie R."/>
            <person name="Wakamatsu A."/>
            <person name="Hayashi K."/>
            <person name="Sato H."/>
            <person name="Nagai K."/>
            <person name="Kimura K."/>
            <person name="Makita H."/>
            <person name="Sekine M."/>
            <person name="Obayashi M."/>
            <person name="Nishi T."/>
            <person name="Shibahara T."/>
            <person name="Tanaka T."/>
            <person name="Ishii S."/>
            <person name="Yamamoto J."/>
            <person name="Saito K."/>
            <person name="Kawai Y."/>
            <person name="Isono Y."/>
            <person name="Nakamura Y."/>
            <person name="Nagahari K."/>
            <person name="Murakami K."/>
            <person name="Yasuda T."/>
            <person name="Iwayanagi T."/>
            <person name="Wagatsuma M."/>
            <person name="Shiratori A."/>
            <person name="Sudo H."/>
            <person name="Hosoiri T."/>
            <person name="Kaku Y."/>
            <person name="Kodaira H."/>
            <person name="Kondo H."/>
            <person name="Sugawara M."/>
            <person name="Takahashi M."/>
            <person name="Kanda K."/>
            <person name="Yokoi T."/>
            <person name="Furuya T."/>
            <person name="Kikkawa E."/>
            <person name="Omura Y."/>
            <person name="Abe K."/>
            <person name="Kamihara K."/>
            <person name="Katsuta N."/>
            <person name="Sato K."/>
            <person name="Tanikawa M."/>
            <person name="Yamazaki M."/>
            <person name="Ninomiya K."/>
            <person name="Ishibashi T."/>
            <person name="Yamashita H."/>
            <person name="Murakawa K."/>
            <person name="Fujimori K."/>
            <person name="Tanai H."/>
            <person name="Kimata M."/>
            <person name="Watanabe M."/>
            <person name="Hiraoka S."/>
            <person name="Chiba Y."/>
            <person name="Ishida S."/>
            <person name="Ono Y."/>
            <person name="Takiguchi S."/>
            <person name="Watanabe S."/>
            <person name="Yosida M."/>
            <person name="Hotuta T."/>
            <person name="Kusano J."/>
            <person name="Kanehori K."/>
            <person name="Takahashi-Fujii A."/>
            <person name="Hara H."/>
            <person name="Tanase T.-O."/>
            <person name="Nomura Y."/>
            <person name="Togiya S."/>
            <person name="Komai F."/>
            <person name="Hara R."/>
            <person name="Takeuchi K."/>
            <person name="Arita M."/>
            <person name="Imose N."/>
            <person name="Musashino K."/>
            <person name="Yuuki H."/>
            <person name="Oshima A."/>
            <person name="Sasaki N."/>
            <person name="Aotsuka S."/>
            <person name="Yoshikawa Y."/>
            <person name="Matsunawa H."/>
            <person name="Ichihara T."/>
            <person name="Shiohata N."/>
            <person name="Sano S."/>
            <person name="Moriya S."/>
            <person name="Momiyama H."/>
            <person name="Satoh N."/>
            <person name="Takami S."/>
            <person name="Terashima Y."/>
            <person name="Suzuki O."/>
            <person name="Nakagawa S."/>
            <person name="Senoh A."/>
            <person name="Mizoguchi H."/>
            <person name="Goto Y."/>
            <person name="Shimizu F."/>
            <person name="Wakebe H."/>
            <person name="Hishigaki H."/>
            <person name="Watanabe T."/>
            <person name="Sugiyama A."/>
            <person name="Takemoto M."/>
            <person name="Kawakami B."/>
            <person name="Yamazaki M."/>
            <person name="Watanabe K."/>
            <person name="Kumagai A."/>
            <person name="Itakura S."/>
            <person name="Fukuzumi Y."/>
            <person name="Fujimori Y."/>
            <person name="Komiyama M."/>
            <person name="Tashiro H."/>
            <person name="Tanigami A."/>
            <person name="Fujiwara T."/>
            <person name="Ono T."/>
            <person name="Yamada K."/>
            <person name="Fujii Y."/>
            <person name="Ozaki K."/>
            <person name="Hirao M."/>
            <person name="Ohmori Y."/>
            <person name="Kawabata A."/>
            <person name="Hikiji T."/>
            <person name="Kobatake N."/>
            <person name="Inagaki H."/>
            <person name="Ikema Y."/>
            <person name="Okamoto S."/>
            <person name="Okitani R."/>
            <person name="Kawakami T."/>
            <person name="Noguchi S."/>
            <person name="Itoh T."/>
            <person name="Shigeta K."/>
            <person name="Senba T."/>
            <person name="Matsumura K."/>
            <person name="Nakajima Y."/>
            <person name="Mizuno T."/>
            <person name="Morinaga M."/>
            <person name="Sasaki M."/>
            <person name="Togashi T."/>
            <person name="Oyama M."/>
            <person name="Hata H."/>
            <person name="Watanabe M."/>
            <person name="Komatsu T."/>
            <person name="Mizushima-Sugano J."/>
            <person name="Satoh T."/>
            <person name="Shirai Y."/>
            <person name="Takahashi Y."/>
            <person name="Nakagawa K."/>
            <person name="Okumura K."/>
            <person name="Nagase T."/>
            <person name="Nomura N."/>
            <person name="Kikuchi H."/>
            <person name="Masuho Y."/>
            <person name="Yamashita R."/>
            <person name="Nakai K."/>
            <person name="Yada T."/>
            <person name="Nakamura Y."/>
            <person name="Ohara O."/>
            <person name="Isogai T."/>
            <person name="Sugano S."/>
        </authorList>
    </citation>
    <scope>NUCLEOTIDE SEQUENCE [LARGE SCALE MRNA] OF 192-771</scope>
    <scope>VARIANTS VAL-310 AND TRP-567</scope>
    <source>
        <tissue>Coronary artery</tissue>
    </source>
</reference>
<reference key="7">
    <citation type="journal article" date="2011" name="Hum. Mol. Genet.">
        <title>Characterization of the CLEAR network reveals an integrated control of cellular clearance pathways.</title>
        <authorList>
            <person name="Palmieri M."/>
            <person name="Impey S."/>
            <person name="Kang H."/>
            <person name="di Ronza A."/>
            <person name="Pelz C."/>
            <person name="Sardiello M."/>
            <person name="Ballabio A."/>
        </authorList>
    </citation>
    <scope>SUBCELLULAR LOCATION</scope>
</reference>
<reference key="8">
    <citation type="journal article" date="2016" name="J. Cell Biol.">
        <title>A GPI processing phospholipase A2, PGAP6, modulates Nodal signaling in embryos by shedding CRIPTO.</title>
        <authorList>
            <person name="Lee G.H."/>
            <person name="Fujita M."/>
            <person name="Takaoka K."/>
            <person name="Murakami Y."/>
            <person name="Fujihara Y."/>
            <person name="Kanzawa N."/>
            <person name="Murakami K.I."/>
            <person name="Kajikawa E."/>
            <person name="Takada Y."/>
            <person name="Saito K."/>
            <person name="Ikawa M."/>
            <person name="Hamada H."/>
            <person name="Maeda Y."/>
            <person name="Kinoshita T."/>
        </authorList>
    </citation>
    <scope>FUNCTION</scope>
    <scope>SUBCELLULAR LOCATION</scope>
    <scope>MUTAGENESIS OF SER-584; HIS-588; ASP-610; HIS-722 AND HIS-726</scope>
</reference>
<reference key="9">
    <citation type="journal article" date="2016" name="PLoS ONE">
        <title>Characterization of novel molecular mechanisms favoring Rac1 membrane translocation.</title>
        <authorList>
            <person name="Castro-Castro A."/>
            <person name="Muriel O."/>
            <person name="Del Pozo M.A."/>
            <person name="Bustelo X.R."/>
        </authorList>
    </citation>
    <scope>FUNCTION</scope>
</reference>
<reference key="10">
    <citation type="journal article" date="2016" name="Proc. Natl. Acad. Sci. U.S.A.">
        <title>Structure-function analysis of myomaker domains required for myoblast fusion.</title>
        <authorList>
            <person name="Millay D.P."/>
            <person name="Gamage D.G."/>
            <person name="Quinn M.E."/>
            <person name="Min Y.L."/>
            <person name="Mitani Y."/>
            <person name="Bassel-Duby R."/>
            <person name="Olson E.N."/>
        </authorList>
    </citation>
    <scope>LACK OF FUSOGENIC ACTIVITY</scope>
</reference>
<keyword id="KW-1003">Cell membrane</keyword>
<keyword id="KW-1015">Disulfide bond</keyword>
<keyword id="KW-0245">EGF-like domain</keyword>
<keyword id="KW-0325">Glycoprotein</keyword>
<keyword id="KW-0378">Hydrolase</keyword>
<keyword id="KW-0443">Lipid metabolism</keyword>
<keyword id="KW-0458">Lysosome</keyword>
<keyword id="KW-0472">Membrane</keyword>
<keyword id="KW-1267">Proteomics identification</keyword>
<keyword id="KW-1185">Reference proteome</keyword>
<keyword id="KW-0732">Signal</keyword>
<keyword id="KW-0812">Transmembrane</keyword>
<keyword id="KW-1133">Transmembrane helix</keyword>